<reference key="1">
    <citation type="submission" date="2006-06" db="EMBL/GenBank/DDBJ databases">
        <title>Complete sequence of chromosome of Mesorhizobium sp. BNC1.</title>
        <authorList>
            <consortium name="US DOE Joint Genome Institute"/>
            <person name="Copeland A."/>
            <person name="Lucas S."/>
            <person name="Lapidus A."/>
            <person name="Barry K."/>
            <person name="Detter J.C."/>
            <person name="Glavina del Rio T."/>
            <person name="Hammon N."/>
            <person name="Israni S."/>
            <person name="Dalin E."/>
            <person name="Tice H."/>
            <person name="Pitluck S."/>
            <person name="Chertkov O."/>
            <person name="Brettin T."/>
            <person name="Bruce D."/>
            <person name="Han C."/>
            <person name="Tapia R."/>
            <person name="Gilna P."/>
            <person name="Schmutz J."/>
            <person name="Larimer F."/>
            <person name="Land M."/>
            <person name="Hauser L."/>
            <person name="Kyrpides N."/>
            <person name="Mikhailova N."/>
            <person name="Richardson P."/>
        </authorList>
    </citation>
    <scope>NUCLEOTIDE SEQUENCE [LARGE SCALE GENOMIC DNA]</scope>
    <source>
        <strain>BNC1</strain>
    </source>
</reference>
<organism>
    <name type="scientific">Chelativorans sp. (strain BNC1)</name>
    <dbReference type="NCBI Taxonomy" id="266779"/>
    <lineage>
        <taxon>Bacteria</taxon>
        <taxon>Pseudomonadati</taxon>
        <taxon>Pseudomonadota</taxon>
        <taxon>Alphaproteobacteria</taxon>
        <taxon>Hyphomicrobiales</taxon>
        <taxon>Phyllobacteriaceae</taxon>
        <taxon>Chelativorans</taxon>
    </lineage>
</organism>
<proteinExistence type="inferred from homology"/>
<accession>Q11CK8</accession>
<sequence>MILYPAIDLKDGECVRLKLGEMSEATVYNRDPAAQAKAFEEQGFEWLHVVDLNGAFAGASVNGAAVEAILKATRNPVQLGGGIRSLEQIEAWLERGLARVILGTVAVRDPALVREACGKFPGKIAVGIDARGGKVAVEGWAETSDLTAAELAKRFEGAGVAAIIYTDIDRDGVLTGINWEATIALADAVSIPIIASGGLASMADIERMVKPDAAKLEGAISGRALYDGRIDPKEALAMLRKARA</sequence>
<comment type="catalytic activity">
    <reaction evidence="1">
        <text>1-(5-phospho-beta-D-ribosyl)-5-[(5-phospho-beta-D-ribosylamino)methylideneamino]imidazole-4-carboxamide = 5-[(5-phospho-1-deoxy-D-ribulos-1-ylimino)methylamino]-1-(5-phospho-beta-D-ribosyl)imidazole-4-carboxamide</text>
        <dbReference type="Rhea" id="RHEA:15469"/>
        <dbReference type="ChEBI" id="CHEBI:58435"/>
        <dbReference type="ChEBI" id="CHEBI:58525"/>
        <dbReference type="EC" id="5.3.1.16"/>
    </reaction>
</comment>
<comment type="pathway">
    <text evidence="1">Amino-acid biosynthesis; L-histidine biosynthesis; L-histidine from 5-phospho-alpha-D-ribose 1-diphosphate: step 4/9.</text>
</comment>
<comment type="subcellular location">
    <subcellularLocation>
        <location evidence="1">Cytoplasm</location>
    </subcellularLocation>
</comment>
<comment type="similarity">
    <text evidence="1">Belongs to the HisA/HisF family.</text>
</comment>
<comment type="sequence caution" evidence="2">
    <conflict type="erroneous initiation">
        <sequence resource="EMBL-CDS" id="ABG64867"/>
    </conflict>
</comment>
<gene>
    <name evidence="1" type="primary">hisA</name>
    <name type="ordered locus">Meso_3496</name>
</gene>
<feature type="chain" id="PRO_0000290494" description="1-(5-phosphoribosyl)-5-[(5-phosphoribosylamino)methylideneamino] imidazole-4-carboxamide isomerase">
    <location>
        <begin position="1"/>
        <end position="244"/>
    </location>
</feature>
<feature type="active site" description="Proton acceptor" evidence="1">
    <location>
        <position position="8"/>
    </location>
</feature>
<feature type="active site" description="Proton donor" evidence="1">
    <location>
        <position position="129"/>
    </location>
</feature>
<keyword id="KW-0028">Amino-acid biosynthesis</keyword>
<keyword id="KW-0963">Cytoplasm</keyword>
<keyword id="KW-0368">Histidine biosynthesis</keyword>
<keyword id="KW-0413">Isomerase</keyword>
<name>HIS4_CHESB</name>
<dbReference type="EC" id="5.3.1.16" evidence="1"/>
<dbReference type="EMBL" id="CP000390">
    <property type="protein sequence ID" value="ABG64867.1"/>
    <property type="status" value="ALT_INIT"/>
    <property type="molecule type" value="Genomic_DNA"/>
</dbReference>
<dbReference type="SMR" id="Q11CK8"/>
<dbReference type="STRING" id="266779.Meso_3496"/>
<dbReference type="KEGG" id="mes:Meso_3496"/>
<dbReference type="eggNOG" id="COG0106">
    <property type="taxonomic scope" value="Bacteria"/>
</dbReference>
<dbReference type="HOGENOM" id="CLU_048577_1_1_5"/>
<dbReference type="OrthoDB" id="9807749at2"/>
<dbReference type="UniPathway" id="UPA00031">
    <property type="reaction ID" value="UER00009"/>
</dbReference>
<dbReference type="GO" id="GO:0005737">
    <property type="term" value="C:cytoplasm"/>
    <property type="evidence" value="ECO:0007669"/>
    <property type="project" value="UniProtKB-SubCell"/>
</dbReference>
<dbReference type="GO" id="GO:0003949">
    <property type="term" value="F:1-(5-phosphoribosyl)-5-[(5-phosphoribosylamino)methylideneamino]imidazole-4-carboxamide isomerase activity"/>
    <property type="evidence" value="ECO:0007669"/>
    <property type="project" value="UniProtKB-UniRule"/>
</dbReference>
<dbReference type="GO" id="GO:0000105">
    <property type="term" value="P:L-histidine biosynthetic process"/>
    <property type="evidence" value="ECO:0007669"/>
    <property type="project" value="UniProtKB-UniRule"/>
</dbReference>
<dbReference type="GO" id="GO:0000162">
    <property type="term" value="P:L-tryptophan biosynthetic process"/>
    <property type="evidence" value="ECO:0007669"/>
    <property type="project" value="TreeGrafter"/>
</dbReference>
<dbReference type="CDD" id="cd04732">
    <property type="entry name" value="HisA"/>
    <property type="match status" value="1"/>
</dbReference>
<dbReference type="FunFam" id="3.20.20.70:FF:000009">
    <property type="entry name" value="1-(5-phosphoribosyl)-5-[(5-phosphoribosylamino)methylideneamino] imidazole-4-carboxamide isomerase"/>
    <property type="match status" value="1"/>
</dbReference>
<dbReference type="Gene3D" id="3.20.20.70">
    <property type="entry name" value="Aldolase class I"/>
    <property type="match status" value="1"/>
</dbReference>
<dbReference type="HAMAP" id="MF_01014">
    <property type="entry name" value="HisA"/>
    <property type="match status" value="1"/>
</dbReference>
<dbReference type="InterPro" id="IPR013785">
    <property type="entry name" value="Aldolase_TIM"/>
</dbReference>
<dbReference type="InterPro" id="IPR006062">
    <property type="entry name" value="His_biosynth"/>
</dbReference>
<dbReference type="InterPro" id="IPR006063">
    <property type="entry name" value="HisA_bact_arch"/>
</dbReference>
<dbReference type="InterPro" id="IPR044524">
    <property type="entry name" value="Isoase_HisA-like"/>
</dbReference>
<dbReference type="InterPro" id="IPR023016">
    <property type="entry name" value="Isoase_HisA-like_bact"/>
</dbReference>
<dbReference type="InterPro" id="IPR011060">
    <property type="entry name" value="RibuloseP-bd_barrel"/>
</dbReference>
<dbReference type="NCBIfam" id="TIGR00007">
    <property type="entry name" value="1-(5-phosphoribosyl)-5-[(5-phosphoribosylamino)methylideneamino]imidazole-4-carboxamide isomerase"/>
    <property type="match status" value="1"/>
</dbReference>
<dbReference type="PANTHER" id="PTHR43090">
    <property type="entry name" value="1-(5-PHOSPHORIBOSYL)-5-[(5-PHOSPHORIBOSYLAMINO)METHYLIDENEAMINO] IMIDAZOLE-4-CARBOXAMIDE ISOMERASE"/>
    <property type="match status" value="1"/>
</dbReference>
<dbReference type="PANTHER" id="PTHR43090:SF2">
    <property type="entry name" value="1-(5-PHOSPHORIBOSYL)-5-[(5-PHOSPHORIBOSYLAMINO)METHYLIDENEAMINO] IMIDAZOLE-4-CARBOXAMIDE ISOMERASE"/>
    <property type="match status" value="1"/>
</dbReference>
<dbReference type="Pfam" id="PF00977">
    <property type="entry name" value="His_biosynth"/>
    <property type="match status" value="1"/>
</dbReference>
<dbReference type="SUPFAM" id="SSF51366">
    <property type="entry name" value="Ribulose-phoshate binding barrel"/>
    <property type="match status" value="1"/>
</dbReference>
<evidence type="ECO:0000255" key="1">
    <source>
        <dbReference type="HAMAP-Rule" id="MF_01014"/>
    </source>
</evidence>
<evidence type="ECO:0000305" key="2"/>
<protein>
    <recommendedName>
        <fullName evidence="1">1-(5-phosphoribosyl)-5-[(5-phosphoribosylamino)methylideneamino] imidazole-4-carboxamide isomerase</fullName>
        <ecNumber evidence="1">5.3.1.16</ecNumber>
    </recommendedName>
    <alternativeName>
        <fullName evidence="1">Phosphoribosylformimino-5-aminoimidazole carboxamide ribotide isomerase</fullName>
    </alternativeName>
</protein>